<keyword id="KW-0963">Cytoplasm</keyword>
<keyword id="KW-0488">Methylation</keyword>
<keyword id="KW-0648">Protein biosynthesis</keyword>
<reference key="1">
    <citation type="submission" date="2008-10" db="EMBL/GenBank/DDBJ databases">
        <title>The complete genome sequence of Helicobacter pylori strain P12.</title>
        <authorList>
            <person name="Fischer W."/>
            <person name="Windhager L."/>
            <person name="Karnholz A."/>
            <person name="Zeiller M."/>
            <person name="Zimmer R."/>
            <person name="Haas R."/>
        </authorList>
    </citation>
    <scope>NUCLEOTIDE SEQUENCE [LARGE SCALE GENOMIC DNA]</scope>
    <source>
        <strain>P12</strain>
    </source>
</reference>
<protein>
    <recommendedName>
        <fullName evidence="1">Peptide chain release factor 2</fullName>
        <shortName evidence="1">RF-2</shortName>
    </recommendedName>
</protein>
<sequence length="363" mass="41382">MDNYTYSELLKSLQNKCDNIALIIKPEKIKQELERIEKEQEDPNFWQDVLKARDTNKEKVRLNRLLETYQKTKDSLDESVELFELAQNDNDEVTLSLLYEEAPTLEHSVQKVEIEIMLSGENDASNAIITIQPGAGGTESQDWASILYRMYLRWAERRGFKSEILDYQDGEEAGIKGVAFIIKGENAYGYLKNENGVHRLVRISPFDANAKRHTSFASVQISPELDDDIDIEIDEKDVRYDYYRASGAGGQHVNKTESAVRITHFPTGIVVQCQNDRSQHKNKASALKMLKSKLYELELEKQQNSTKNEEKSEIGWGHQIRSYVLAPYQQVKDARSNIAYSNVEAILDGDIDAILEGVLIAKA</sequence>
<proteinExistence type="inferred from homology"/>
<gene>
    <name evidence="1" type="primary">prfB</name>
    <name type="ordered locus">HPP12_0168</name>
</gene>
<name>RF2_HELP2</name>
<feature type="chain" id="PRO_1000093540" description="Peptide chain release factor 2">
    <location>
        <begin position="1"/>
        <end position="363"/>
    </location>
</feature>
<feature type="modified residue" description="N5-methylglutamine" evidence="1">
    <location>
        <position position="251"/>
    </location>
</feature>
<accession>B6JPR7</accession>
<comment type="function">
    <text evidence="1">Peptide chain release factor 2 directs the termination of translation in response to the peptide chain termination codons UGA and UAA.</text>
</comment>
<comment type="subcellular location">
    <subcellularLocation>
        <location evidence="1">Cytoplasm</location>
    </subcellularLocation>
</comment>
<comment type="PTM">
    <text evidence="1">Methylated by PrmC. Methylation increases the termination efficiency of RF2.</text>
</comment>
<comment type="similarity">
    <text evidence="1">Belongs to the prokaryotic/mitochondrial release factor family.</text>
</comment>
<evidence type="ECO:0000255" key="1">
    <source>
        <dbReference type="HAMAP-Rule" id="MF_00094"/>
    </source>
</evidence>
<organism>
    <name type="scientific">Helicobacter pylori (strain P12)</name>
    <dbReference type="NCBI Taxonomy" id="570508"/>
    <lineage>
        <taxon>Bacteria</taxon>
        <taxon>Pseudomonadati</taxon>
        <taxon>Campylobacterota</taxon>
        <taxon>Epsilonproteobacteria</taxon>
        <taxon>Campylobacterales</taxon>
        <taxon>Helicobacteraceae</taxon>
        <taxon>Helicobacter</taxon>
    </lineage>
</organism>
<dbReference type="EMBL" id="CP001217">
    <property type="protein sequence ID" value="ACJ07328.1"/>
    <property type="molecule type" value="Genomic_DNA"/>
</dbReference>
<dbReference type="SMR" id="B6JPR7"/>
<dbReference type="KEGG" id="hpp:HPP12_0168"/>
<dbReference type="HOGENOM" id="CLU_036856_6_0_7"/>
<dbReference type="Proteomes" id="UP000008198">
    <property type="component" value="Chromosome"/>
</dbReference>
<dbReference type="GO" id="GO:0005737">
    <property type="term" value="C:cytoplasm"/>
    <property type="evidence" value="ECO:0007669"/>
    <property type="project" value="UniProtKB-SubCell"/>
</dbReference>
<dbReference type="GO" id="GO:0016149">
    <property type="term" value="F:translation release factor activity, codon specific"/>
    <property type="evidence" value="ECO:0007669"/>
    <property type="project" value="UniProtKB-UniRule"/>
</dbReference>
<dbReference type="FunFam" id="3.30.160.20:FF:000010">
    <property type="entry name" value="Peptide chain release factor 2"/>
    <property type="match status" value="1"/>
</dbReference>
<dbReference type="Gene3D" id="3.30.160.20">
    <property type="match status" value="1"/>
</dbReference>
<dbReference type="Gene3D" id="3.30.70.1660">
    <property type="match status" value="1"/>
</dbReference>
<dbReference type="Gene3D" id="1.20.58.410">
    <property type="entry name" value="Release factor"/>
    <property type="match status" value="1"/>
</dbReference>
<dbReference type="HAMAP" id="MF_00094">
    <property type="entry name" value="Rel_fac_2"/>
    <property type="match status" value="1"/>
</dbReference>
<dbReference type="InterPro" id="IPR005139">
    <property type="entry name" value="PCRF"/>
</dbReference>
<dbReference type="InterPro" id="IPR000352">
    <property type="entry name" value="Pep_chain_release_fac_I"/>
</dbReference>
<dbReference type="InterPro" id="IPR045853">
    <property type="entry name" value="Pep_chain_release_fac_I_sf"/>
</dbReference>
<dbReference type="InterPro" id="IPR004374">
    <property type="entry name" value="PrfB"/>
</dbReference>
<dbReference type="NCBIfam" id="TIGR00020">
    <property type="entry name" value="prfB"/>
    <property type="match status" value="1"/>
</dbReference>
<dbReference type="PANTHER" id="PTHR43116:SF3">
    <property type="entry name" value="CLASS I PEPTIDE CHAIN RELEASE FACTOR"/>
    <property type="match status" value="1"/>
</dbReference>
<dbReference type="PANTHER" id="PTHR43116">
    <property type="entry name" value="PEPTIDE CHAIN RELEASE FACTOR 2"/>
    <property type="match status" value="1"/>
</dbReference>
<dbReference type="Pfam" id="PF03462">
    <property type="entry name" value="PCRF"/>
    <property type="match status" value="1"/>
</dbReference>
<dbReference type="Pfam" id="PF00472">
    <property type="entry name" value="RF-1"/>
    <property type="match status" value="1"/>
</dbReference>
<dbReference type="SMART" id="SM00937">
    <property type="entry name" value="PCRF"/>
    <property type="match status" value="1"/>
</dbReference>
<dbReference type="SUPFAM" id="SSF75620">
    <property type="entry name" value="Release factor"/>
    <property type="match status" value="1"/>
</dbReference>
<dbReference type="PROSITE" id="PS00745">
    <property type="entry name" value="RF_PROK_I"/>
    <property type="match status" value="1"/>
</dbReference>